<proteinExistence type="inferred from homology"/>
<organism>
    <name type="scientific">Synechococcus sp. (strain JA-3-3Ab)</name>
    <name type="common">Cyanobacteria bacterium Yellowstone A-Prime</name>
    <dbReference type="NCBI Taxonomy" id="321327"/>
    <lineage>
        <taxon>Bacteria</taxon>
        <taxon>Bacillati</taxon>
        <taxon>Cyanobacteriota</taxon>
        <taxon>Cyanophyceae</taxon>
        <taxon>Synechococcales</taxon>
        <taxon>Synechococcaceae</taxon>
        <taxon>Synechococcus</taxon>
    </lineage>
</organism>
<feature type="chain" id="PRO_0000277396" description="Photosystem I reaction center subunit XII">
    <location>
        <begin position="1"/>
        <end position="30"/>
    </location>
</feature>
<feature type="transmembrane region" description="Helical" evidence="1">
    <location>
        <begin position="6"/>
        <end position="26"/>
    </location>
</feature>
<gene>
    <name evidence="1" type="primary">psaM</name>
    <name type="ordered locus">CYA_2014</name>
</gene>
<evidence type="ECO:0000255" key="1">
    <source>
        <dbReference type="HAMAP-Rule" id="MF_00828"/>
    </source>
</evidence>
<evidence type="ECO:0000305" key="2"/>
<comment type="subcellular location">
    <subcellularLocation>
        <location evidence="1">Cellular thylakoid membrane</location>
        <topology evidence="1">Single-pass membrane protein</topology>
    </subcellularLocation>
</comment>
<comment type="similarity">
    <text evidence="1">Belongs to the PsaM family.</text>
</comment>
<comment type="sequence caution" evidence="2">
    <conflict type="erroneous initiation">
        <sequence resource="EMBL-CDS" id="ABD00156"/>
    </conflict>
    <text>Extended N-terminus.</text>
</comment>
<protein>
    <recommendedName>
        <fullName evidence="1">Photosystem I reaction center subunit XII</fullName>
    </recommendedName>
    <alternativeName>
        <fullName evidence="1">PSI-M</fullName>
    </alternativeName>
</protein>
<reference key="1">
    <citation type="journal article" date="2007" name="ISME J.">
        <title>Population level functional diversity in a microbial community revealed by comparative genomic and metagenomic analyses.</title>
        <authorList>
            <person name="Bhaya D."/>
            <person name="Grossman A.R."/>
            <person name="Steunou A.-S."/>
            <person name="Khuri N."/>
            <person name="Cohan F.M."/>
            <person name="Hamamura N."/>
            <person name="Melendrez M.C."/>
            <person name="Bateson M.M."/>
            <person name="Ward D.M."/>
            <person name="Heidelberg J.F."/>
        </authorList>
    </citation>
    <scope>NUCLEOTIDE SEQUENCE [LARGE SCALE GENOMIC DNA]</scope>
    <source>
        <strain>JA-3-3Ab</strain>
    </source>
</reference>
<accession>Q2JT51</accession>
<sequence>MTDAQVFTILAIALVPAVMAALLGSALARS</sequence>
<name>PSAM_SYNJA</name>
<dbReference type="EMBL" id="CP000239">
    <property type="protein sequence ID" value="ABD00156.1"/>
    <property type="status" value="ALT_INIT"/>
    <property type="molecule type" value="Genomic_DNA"/>
</dbReference>
<dbReference type="RefSeq" id="WP_041438450.1">
    <property type="nucleotide sequence ID" value="NC_007775.1"/>
</dbReference>
<dbReference type="SMR" id="Q2JT51"/>
<dbReference type="STRING" id="321327.CYA_2014"/>
<dbReference type="KEGG" id="cya:CYA_2014"/>
<dbReference type="HOGENOM" id="CLU_215773_3_0_3"/>
<dbReference type="OrthoDB" id="9899055at2"/>
<dbReference type="Proteomes" id="UP000008818">
    <property type="component" value="Chromosome"/>
</dbReference>
<dbReference type="GO" id="GO:0009522">
    <property type="term" value="C:photosystem I"/>
    <property type="evidence" value="ECO:0007669"/>
    <property type="project" value="UniProtKB-KW"/>
</dbReference>
<dbReference type="GO" id="GO:0031676">
    <property type="term" value="C:plasma membrane-derived thylakoid membrane"/>
    <property type="evidence" value="ECO:0007669"/>
    <property type="project" value="UniProtKB-SubCell"/>
</dbReference>
<dbReference type="GO" id="GO:0015979">
    <property type="term" value="P:photosynthesis"/>
    <property type="evidence" value="ECO:0007669"/>
    <property type="project" value="UniProtKB-UniRule"/>
</dbReference>
<dbReference type="HAMAP" id="MF_00828">
    <property type="entry name" value="PSI_PsaM"/>
    <property type="match status" value="1"/>
</dbReference>
<dbReference type="InterPro" id="IPR010010">
    <property type="entry name" value="PSI_PsaM"/>
</dbReference>
<dbReference type="InterPro" id="IPR037279">
    <property type="entry name" value="PSI_PsaM_sf"/>
</dbReference>
<dbReference type="NCBIfam" id="TIGR03053">
    <property type="entry name" value="PS_I_psaM"/>
    <property type="match status" value="1"/>
</dbReference>
<dbReference type="Pfam" id="PF07465">
    <property type="entry name" value="PsaM"/>
    <property type="match status" value="1"/>
</dbReference>
<dbReference type="SUPFAM" id="SSF81548">
    <property type="entry name" value="Subunit XII of photosystem I reaction centre, PsaM"/>
    <property type="match status" value="1"/>
</dbReference>
<keyword id="KW-0472">Membrane</keyword>
<keyword id="KW-0602">Photosynthesis</keyword>
<keyword id="KW-0603">Photosystem I</keyword>
<keyword id="KW-0793">Thylakoid</keyword>
<keyword id="KW-0812">Transmembrane</keyword>
<keyword id="KW-1133">Transmembrane helix</keyword>